<feature type="chain" id="PRO_0000127067" description="Origin recognition complex subunit 1">
    <location>
        <begin position="1"/>
        <end position="861"/>
    </location>
</feature>
<feature type="domain" description="BAH" evidence="3">
    <location>
        <begin position="45"/>
        <end position="171"/>
    </location>
</feature>
<feature type="region of interest" description="Disordered" evidence="4">
    <location>
        <begin position="183"/>
        <end position="233"/>
    </location>
</feature>
<feature type="region of interest" description="Disordered" evidence="4">
    <location>
        <begin position="269"/>
        <end position="312"/>
    </location>
</feature>
<feature type="region of interest" description="Disordered" evidence="4">
    <location>
        <begin position="360"/>
        <end position="382"/>
    </location>
</feature>
<feature type="region of interest" description="Disordered" evidence="4">
    <location>
        <begin position="412"/>
        <end position="476"/>
    </location>
</feature>
<feature type="region of interest" description="Necessary and sufficient for ORC complex assembly">
    <location>
        <begin position="501"/>
        <end position="861"/>
    </location>
</feature>
<feature type="compositionally biased region" description="Basic and acidic residues" evidence="4">
    <location>
        <begin position="207"/>
        <end position="216"/>
    </location>
</feature>
<feature type="compositionally biased region" description="Polar residues" evidence="4">
    <location>
        <begin position="270"/>
        <end position="287"/>
    </location>
</feature>
<feature type="compositionally biased region" description="Low complexity" evidence="4">
    <location>
        <begin position="440"/>
        <end position="456"/>
    </location>
</feature>
<feature type="compositionally biased region" description="Basic residues" evidence="4">
    <location>
        <begin position="457"/>
        <end position="466"/>
    </location>
</feature>
<feature type="binding site" evidence="12 15">
    <location>
        <position position="500"/>
    </location>
    <ligand>
        <name>ATP</name>
        <dbReference type="ChEBI" id="CHEBI:30616"/>
    </ligand>
</feature>
<feature type="binding site" evidence="12 15 16">
    <location>
        <begin position="534"/>
        <end position="542"/>
    </location>
    <ligand>
        <name>ATP</name>
        <dbReference type="ChEBI" id="CHEBI:30616"/>
    </ligand>
</feature>
<feature type="binding site" evidence="12 15 16">
    <location>
        <position position="620"/>
    </location>
    <ligand>
        <name>Mg(2+)</name>
        <dbReference type="ChEBI" id="CHEBI:18420"/>
    </ligand>
</feature>
<feature type="binding site" evidence="12 15">
    <location>
        <position position="621"/>
    </location>
    <ligand>
        <name>ATP</name>
        <dbReference type="ChEBI" id="CHEBI:30616"/>
    </ligand>
</feature>
<feature type="binding site" evidence="12 15 16">
    <location>
        <position position="621"/>
    </location>
    <ligand>
        <name>Mg(2+)</name>
        <dbReference type="ChEBI" id="CHEBI:18420"/>
    </ligand>
</feature>
<feature type="binding site" evidence="12 15">
    <location>
        <position position="654"/>
    </location>
    <ligand>
        <name>ATP</name>
        <dbReference type="ChEBI" id="CHEBI:30616"/>
    </ligand>
</feature>
<feature type="binding site" evidence="12 15">
    <location>
        <position position="720"/>
    </location>
    <ligand>
        <name>ATP</name>
        <dbReference type="ChEBI" id="CHEBI:30616"/>
    </ligand>
</feature>
<feature type="site" description="Histone H4K20me2 binding" evidence="2">
    <location>
        <position position="94"/>
    </location>
</feature>
<feature type="modified residue" description="Phosphoserine" evidence="21">
    <location>
        <position position="199"/>
    </location>
</feature>
<feature type="modified residue" description="Phosphothreonine" evidence="17 19">
    <location>
        <position position="203"/>
    </location>
</feature>
<feature type="modified residue" description="Phosphoserine" evidence="2">
    <location>
        <position position="252"/>
    </location>
</feature>
<feature type="modified residue" description="Phosphoserine" evidence="2">
    <location>
        <position position="255"/>
    </location>
</feature>
<feature type="modified residue" description="Phosphoserine" evidence="19 20 21">
    <location>
        <position position="273"/>
    </location>
</feature>
<feature type="modified residue" description="Phosphoserine" evidence="19 21">
    <location>
        <position position="287"/>
    </location>
</feature>
<feature type="modified residue" description="N6-acetyllysine" evidence="18">
    <location>
        <position position="326"/>
    </location>
</feature>
<feature type="modified residue" description="Phosphothreonine" evidence="17">
    <location>
        <position position="337"/>
    </location>
</feature>
<feature type="modified residue" description="Phosphoserine" evidence="17">
    <location>
        <position position="340"/>
    </location>
</feature>
<feature type="modified residue" description="Phosphoserine" evidence="17">
    <location>
        <position position="417"/>
    </location>
</feature>
<feature type="modified residue" description="Phosphoserine" evidence="17">
    <location>
        <position position="420"/>
    </location>
</feature>
<feature type="modified residue" description="Phosphoserine" evidence="17 21">
    <location>
        <position position="478"/>
    </location>
</feature>
<feature type="sequence variant" id="VAR_014507" description="In dbSNP:rs3087473.">
    <original>R</original>
    <variation>S</variation>
    <location>
        <position position="19"/>
    </location>
</feature>
<feature type="sequence variant" id="VAR_065481" description="In MGORS1; dbSNP:rs387906827." evidence="10">
    <original>F</original>
    <variation>S</variation>
    <location>
        <position position="89"/>
    </location>
</feature>
<feature type="sequence variant" id="VAR_065482" description="In MGORS1; dbSNP:rs143141689." evidence="8 9 10">
    <original>R</original>
    <variation>Q</variation>
    <location>
        <position position="105"/>
    </location>
</feature>
<feature type="sequence variant" id="VAR_065483" description="In MGORS1; dbSNP:rs387906826." evidence="10">
    <original>E</original>
    <variation>G</variation>
    <location>
        <position position="127"/>
    </location>
</feature>
<feature type="sequence variant" id="VAR_014508" description="In dbSNP:rs3087482.">
    <original>Q</original>
    <variation>H</variation>
    <location>
        <position position="180"/>
    </location>
</feature>
<feature type="sequence variant" id="VAR_014509" description="In dbSNP:rs3087477.">
    <original>V</original>
    <variation>M</variation>
    <location>
        <position position="190"/>
    </location>
</feature>
<feature type="sequence variant" id="VAR_014510" description="In dbSNP:rs3087476.">
    <original>A</original>
    <variation>V</variation>
    <location>
        <position position="372"/>
    </location>
</feature>
<feature type="sequence variant" id="VAR_014511" description="In dbSNP:rs3087472.">
    <original>R</original>
    <variation>M</variation>
    <location>
        <position position="441"/>
    </location>
</feature>
<feature type="sequence variant" id="VAR_014512" description="In dbSNP:rs3087470.">
    <original>K</original>
    <variation>E</variation>
    <location>
        <position position="456"/>
    </location>
</feature>
<feature type="sequence variant" id="VAR_014513" description="In dbSNP:rs3087481.">
    <original>T</original>
    <variation>M</variation>
    <location>
        <position position="466"/>
    </location>
</feature>
<feature type="sequence variant" id="VAR_014514" description="In dbSNP:rs3087483.">
    <original>C</original>
    <variation>Y</variation>
    <location>
        <position position="469"/>
    </location>
</feature>
<feature type="sequence variant" id="VAR_065484" description="In MGORS1; dbSNP:rs201253919." evidence="8">
    <original>R</original>
    <variation>W</variation>
    <location>
        <position position="666"/>
    </location>
</feature>
<feature type="sequence variant" id="VAR_065485" description="In MGORS1; abolished ATPase activity; dbSNP:rs387906828." evidence="10 12">
    <original>R</original>
    <variation>Q</variation>
    <location>
        <position position="720"/>
    </location>
</feature>
<feature type="sequence variant" id="VAR_050426" description="In dbSNP:rs34521609.">
    <original>M</original>
    <variation>T</variation>
    <location>
        <position position="816"/>
    </location>
</feature>
<feature type="mutagenesis site" description="Abolished ATPase activity." evidence="12">
    <original>D</original>
    <variation>A</variation>
    <location>
        <position position="620"/>
    </location>
</feature>
<feature type="sequence conflict" description="In Ref. 1; AAC50325." evidence="14" ref="1">
    <original>Q</original>
    <variation>H</variation>
    <location>
        <position position="582"/>
    </location>
</feature>
<feature type="helix" evidence="23">
    <location>
        <begin position="488"/>
        <end position="495"/>
    </location>
</feature>
<feature type="helix" evidence="23">
    <location>
        <begin position="508"/>
        <end position="522"/>
    </location>
</feature>
<feature type="turn" evidence="23">
    <location>
        <begin position="523"/>
        <end position="525"/>
    </location>
</feature>
<feature type="strand" evidence="23">
    <location>
        <begin position="528"/>
        <end position="533"/>
    </location>
</feature>
<feature type="helix" evidence="23">
    <location>
        <begin position="540"/>
        <end position="556"/>
    </location>
</feature>
<feature type="strand" evidence="23">
    <location>
        <begin position="565"/>
        <end position="570"/>
    </location>
</feature>
<feature type="helix" evidence="23">
    <location>
        <begin position="578"/>
        <end position="587"/>
    </location>
</feature>
<feature type="helix" evidence="23">
    <location>
        <begin position="594"/>
        <end position="604"/>
    </location>
</feature>
<feature type="strand" evidence="23">
    <location>
        <begin position="616"/>
        <end position="620"/>
    </location>
</feature>
<feature type="helix" evidence="23">
    <location>
        <begin position="622"/>
        <end position="625"/>
    </location>
</feature>
<feature type="helix" evidence="23">
    <location>
        <begin position="631"/>
        <end position="638"/>
    </location>
</feature>
<feature type="strand" evidence="23">
    <location>
        <begin position="639"/>
        <end position="642"/>
    </location>
</feature>
<feature type="turn" evidence="23">
    <location>
        <begin position="643"/>
        <end position="645"/>
    </location>
</feature>
<feature type="strand" evidence="23">
    <location>
        <begin position="648"/>
        <end position="652"/>
    </location>
</feature>
<feature type="helix" evidence="23">
    <location>
        <begin position="658"/>
        <end position="660"/>
    </location>
</feature>
<feature type="strand" evidence="23">
    <location>
        <begin position="674"/>
        <end position="677"/>
    </location>
</feature>
<feature type="helix" evidence="23">
    <location>
        <begin position="683"/>
        <end position="693"/>
    </location>
</feature>
<feature type="helix" evidence="23">
    <location>
        <begin position="702"/>
        <end position="715"/>
    </location>
</feature>
<feature type="helix" evidence="23">
    <location>
        <begin position="719"/>
        <end position="735"/>
    </location>
</feature>
<feature type="helix" evidence="23">
    <location>
        <begin position="748"/>
        <end position="759"/>
    </location>
</feature>
<feature type="helix" evidence="23">
    <location>
        <begin position="763"/>
        <end position="768"/>
    </location>
</feature>
<feature type="helix" evidence="23">
    <location>
        <begin position="772"/>
        <end position="788"/>
    </location>
</feature>
<feature type="helix" evidence="23">
    <location>
        <begin position="795"/>
        <end position="809"/>
    </location>
</feature>
<feature type="helix" evidence="23">
    <location>
        <begin position="816"/>
        <end position="828"/>
    </location>
</feature>
<feature type="strand" evidence="23">
    <location>
        <begin position="831"/>
        <end position="833"/>
    </location>
</feature>
<feature type="helix" evidence="22">
    <location>
        <begin position="837"/>
        <end position="842"/>
    </location>
</feature>
<feature type="strand" evidence="23">
    <location>
        <begin position="844"/>
        <end position="849"/>
    </location>
</feature>
<feature type="helix" evidence="23">
    <location>
        <begin position="851"/>
        <end position="858"/>
    </location>
</feature>
<gene>
    <name type="primary">ORC1</name>
    <name type="synonym">ORC1L</name>
    <name type="synonym">PARC1</name>
</gene>
<organism>
    <name type="scientific">Homo sapiens</name>
    <name type="common">Human</name>
    <dbReference type="NCBI Taxonomy" id="9606"/>
    <lineage>
        <taxon>Eukaryota</taxon>
        <taxon>Metazoa</taxon>
        <taxon>Chordata</taxon>
        <taxon>Craniata</taxon>
        <taxon>Vertebrata</taxon>
        <taxon>Euteleostomi</taxon>
        <taxon>Mammalia</taxon>
        <taxon>Eutheria</taxon>
        <taxon>Euarchontoglires</taxon>
        <taxon>Primates</taxon>
        <taxon>Haplorrhini</taxon>
        <taxon>Catarrhini</taxon>
        <taxon>Hominidae</taxon>
        <taxon>Homo</taxon>
    </lineage>
</organism>
<keyword id="KW-0002">3D-structure</keyword>
<keyword id="KW-0007">Acetylation</keyword>
<keyword id="KW-0067">ATP-binding</keyword>
<keyword id="KW-0225">Disease variant</keyword>
<keyword id="KW-0235">DNA replication</keyword>
<keyword id="KW-0238">DNA-binding</keyword>
<keyword id="KW-0242">Dwarfism</keyword>
<keyword id="KW-0460">Magnesium</keyword>
<keyword id="KW-0479">Metal-binding</keyword>
<keyword id="KW-0547">Nucleotide-binding</keyword>
<keyword id="KW-0539">Nucleus</keyword>
<keyword id="KW-0597">Phosphoprotein</keyword>
<keyword id="KW-1267">Proteomics identification</keyword>
<keyword id="KW-1185">Reference proteome</keyword>
<proteinExistence type="evidence at protein level"/>
<comment type="function">
    <text>Component of the origin recognition complex (ORC) that binds origins of replication. DNA-binding is ATP-dependent. The DNA sequences that define origins of replication have not been identified yet. ORC is required to assemble the pre-replication complex necessary to initiate DNA replication.</text>
</comment>
<comment type="subunit">
    <text evidence="5 6 11 13">Component of ORC, a complex composed of at least 6 subunits: ORC1, ORC2, ORC3, ORC4, ORC5 and ORC6. ORC is regulated in a cell-cycle dependent manner. It is sequentially assembled at the exit from anaphase of mitosis and disassembled as cells enter S phase. Interacts with CDC6 and KAT7/HBO1. Interacts with LRWD1 predominantly during the G1 phase and with less affinity during mitosis, when phosphorylated.</text>
</comment>
<comment type="interaction">
    <interactant intactId="EBI-374847">
        <id>Q13415</id>
    </interactant>
    <interactant intactId="EBI-5916454">
        <id>A6NEM1</id>
        <label>GOLGA6L9</label>
    </interactant>
    <organismsDiffer>false</organismsDiffer>
    <experiments>3</experiments>
</comment>
<comment type="interaction">
    <interactant intactId="EBI-374847">
        <id>Q13415</id>
    </interactant>
    <interactant intactId="EBI-374957">
        <id>Q13416</id>
        <label>ORC2</label>
    </interactant>
    <organismsDiffer>false</organismsDiffer>
    <experiments>14</experiments>
</comment>
<comment type="interaction">
    <interactant intactId="EBI-374847">
        <id>Q13415</id>
    </interactant>
    <interactant intactId="EBI-374916">
        <id>Q9UBD5</id>
        <label>ORC3</label>
    </interactant>
    <organismsDiffer>false</organismsDiffer>
    <experiments>16</experiments>
</comment>
<comment type="interaction">
    <interactant intactId="EBI-374847">
        <id>Q13415</id>
    </interactant>
    <interactant intactId="EBI-374928">
        <id>O43913</id>
        <label>ORC5</label>
    </interactant>
    <organismsDiffer>false</organismsDiffer>
    <experiments>11</experiments>
</comment>
<comment type="interaction">
    <interactant intactId="EBI-374847">
        <id>Q13415</id>
    </interactant>
    <interactant intactId="EBI-456291">
        <id>Q13309</id>
        <label>SKP2</label>
    </interactant>
    <organismsDiffer>false</organismsDiffer>
    <experiments>2</experiments>
</comment>
<comment type="interaction">
    <interactant intactId="EBI-374847">
        <id>Q13415</id>
    </interactant>
    <interactant intactId="EBI-706637">
        <id>Q15554</id>
        <label>TERF2</label>
    </interactant>
    <organismsDiffer>false</organismsDiffer>
    <experiments>2</experiments>
</comment>
<comment type="interaction">
    <interactant intactId="EBI-374847">
        <id>Q13415</id>
    </interactant>
    <interactant intactId="EBI-996522">
        <id>P03211</id>
        <label>EBNA1</label>
    </interactant>
    <organismsDiffer>true</organismsDiffer>
    <experiments>2</experiments>
</comment>
<comment type="subcellular location">
    <subcellularLocation>
        <location>Nucleus</location>
    </subcellularLocation>
</comment>
<comment type="developmental stage">
    <text evidence="7">Expression is cell-cycle regulated, it starts to accumulate in mid-G1 phase, reaches a peak at the G1/S boundary, and decreases to a basal level in S phase (at protein level).</text>
</comment>
<comment type="domain">
    <text evidence="1">The BAH domain mediates binding to dimethylated histone H4 'Lys-20' (H4K20me2), which is enriched at replication origins.</text>
</comment>
<comment type="PTM">
    <text evidence="11">Phosphorylated during mitosis.</text>
</comment>
<comment type="disease" evidence="8 9 10 12">
    <disease id="DI-03043">
        <name>Meier-Gorlin syndrome 1</name>
        <acronym>MGORS1</acronym>
        <description>A syndrome characterized by bilateral microtia, aplasia/hypoplasia of the patellae, and severe intrauterine and postnatal growth retardation with short stature and poor weight gain. Additional clinical findings include anomalies of cranial sutures, microcephaly, apparently low-set and simple ears, microstomia, full lips, highly arched or cleft palate, micrognathia, genitourinary tract anomalies, and various skeletal anomalies. While almost all cases have primordial dwarfism with substantial prenatal and postnatal growth retardation, not all cases have microcephaly, and microtia and absent/hypoplastic patella are absent in some. Despite the presence of microcephaly, intellect is usually normal.</description>
        <dbReference type="MIM" id="224690"/>
    </disease>
    <text>The disease is caused by variants affecting the gene represented in this entry.</text>
</comment>
<comment type="similarity">
    <text evidence="14">Belongs to the ORC1 family.</text>
</comment>
<dbReference type="EMBL" id="U40152">
    <property type="protein sequence ID" value="AAC50325.1"/>
    <property type="molecule type" value="mRNA"/>
</dbReference>
<dbReference type="EMBL" id="U43416">
    <property type="protein sequence ID" value="AAA86260.1"/>
    <property type="molecule type" value="mRNA"/>
</dbReference>
<dbReference type="EMBL" id="AL513218">
    <property type="status" value="NOT_ANNOTATED_CDS"/>
    <property type="molecule type" value="Genomic_DNA"/>
</dbReference>
<dbReference type="EMBL" id="CH471059">
    <property type="protein sequence ID" value="EAX06783.1"/>
    <property type="molecule type" value="Genomic_DNA"/>
</dbReference>
<dbReference type="EMBL" id="CH471059">
    <property type="protein sequence ID" value="EAX06784.1"/>
    <property type="molecule type" value="Genomic_DNA"/>
</dbReference>
<dbReference type="CCDS" id="CCDS566.1"/>
<dbReference type="PIR" id="G02329">
    <property type="entry name" value="G02329"/>
</dbReference>
<dbReference type="RefSeq" id="NP_001177747.1">
    <property type="nucleotide sequence ID" value="NM_001190818.2"/>
</dbReference>
<dbReference type="RefSeq" id="NP_001177748.1">
    <property type="nucleotide sequence ID" value="NM_001190819.1"/>
</dbReference>
<dbReference type="RefSeq" id="NP_004144.2">
    <property type="nucleotide sequence ID" value="NM_004153.3"/>
</dbReference>
<dbReference type="RefSeq" id="XP_047277630.1">
    <property type="nucleotide sequence ID" value="XM_047421674.1"/>
</dbReference>
<dbReference type="RefSeq" id="XP_054192799.1">
    <property type="nucleotide sequence ID" value="XM_054336824.1"/>
</dbReference>
<dbReference type="PDB" id="5UJ7">
    <property type="method" value="X-ray"/>
    <property type="resolution" value="3.39 A"/>
    <property type="chains" value="A/B=471-861"/>
</dbReference>
<dbReference type="PDB" id="5UJM">
    <property type="method" value="EM"/>
    <property type="resolution" value="18.00 A"/>
    <property type="chains" value="A=471-861"/>
</dbReference>
<dbReference type="PDB" id="6P3W">
    <property type="method" value="X-ray"/>
    <property type="resolution" value="2.54 A"/>
    <property type="chains" value="E/F=233-239"/>
</dbReference>
<dbReference type="PDB" id="7CTF">
    <property type="method" value="EM"/>
    <property type="resolution" value="4.80 A"/>
    <property type="chains" value="A=1-861"/>
</dbReference>
<dbReference type="PDB" id="7CTG">
    <property type="method" value="EM"/>
    <property type="resolution" value="5.00 A"/>
    <property type="chains" value="A=1-861"/>
</dbReference>
<dbReference type="PDB" id="7JPO">
    <property type="method" value="EM"/>
    <property type="resolution" value="3.20 A"/>
    <property type="chains" value="A=471-861"/>
</dbReference>
<dbReference type="PDB" id="7JPP">
    <property type="method" value="EM"/>
    <property type="resolution" value="3.70 A"/>
    <property type="chains" value="A=471-861"/>
</dbReference>
<dbReference type="PDB" id="7JPR">
    <property type="method" value="EM"/>
    <property type="resolution" value="4.00 A"/>
    <property type="chains" value="A=471-861"/>
</dbReference>
<dbReference type="PDB" id="7JPS">
    <property type="method" value="EM"/>
    <property type="resolution" value="4.40 A"/>
    <property type="chains" value="A=471-861"/>
</dbReference>
<dbReference type="PDB" id="8RWV">
    <property type="method" value="EM"/>
    <property type="resolution" value="6.68 A"/>
    <property type="chains" value="A=2-861"/>
</dbReference>
<dbReference type="PDB" id="8S0C">
    <property type="method" value="EM"/>
    <property type="resolution" value="4.00 A"/>
    <property type="chains" value="A=1-861"/>
</dbReference>
<dbReference type="PDB" id="8S0D">
    <property type="method" value="EM"/>
    <property type="resolution" value="3.60 A"/>
    <property type="chains" value="A=1-861"/>
</dbReference>
<dbReference type="PDB" id="8S0E">
    <property type="method" value="EM"/>
    <property type="resolution" value="3.80 A"/>
    <property type="chains" value="A=1-861"/>
</dbReference>
<dbReference type="PDB" id="8S0F">
    <property type="method" value="EM"/>
    <property type="resolution" value="4.10 A"/>
    <property type="chains" value="A=1-861"/>
</dbReference>
<dbReference type="PDBsum" id="5UJ7"/>
<dbReference type="PDBsum" id="5UJM"/>
<dbReference type="PDBsum" id="6P3W"/>
<dbReference type="PDBsum" id="7CTF"/>
<dbReference type="PDBsum" id="7CTG"/>
<dbReference type="PDBsum" id="7JPO"/>
<dbReference type="PDBsum" id="7JPP"/>
<dbReference type="PDBsum" id="7JPR"/>
<dbReference type="PDBsum" id="7JPS"/>
<dbReference type="PDBsum" id="8RWV"/>
<dbReference type="PDBsum" id="8S0C"/>
<dbReference type="PDBsum" id="8S0D"/>
<dbReference type="PDBsum" id="8S0E"/>
<dbReference type="PDBsum" id="8S0F"/>
<dbReference type="EMDB" id="EMD-19566"/>
<dbReference type="EMDB" id="EMD-19621"/>
<dbReference type="EMDB" id="EMD-19622"/>
<dbReference type="EMDB" id="EMD-19623"/>
<dbReference type="EMDB" id="EMD-19624"/>
<dbReference type="EMDB" id="EMD-22417"/>
<dbReference type="EMDB" id="EMD-22418"/>
<dbReference type="EMDB" id="EMD-22420"/>
<dbReference type="EMDB" id="EMD-22421"/>
<dbReference type="EMDB" id="EMD-30463"/>
<dbReference type="EMDB" id="EMD-30464"/>
<dbReference type="SMR" id="Q13415"/>
<dbReference type="BioGRID" id="111040">
    <property type="interactions" value="87"/>
</dbReference>
<dbReference type="ComplexPortal" id="CPX-1880">
    <property type="entry name" value="Nuclear origin recognition complex"/>
</dbReference>
<dbReference type="CORUM" id="Q13415"/>
<dbReference type="DIP" id="DIP-29688N"/>
<dbReference type="FunCoup" id="Q13415">
    <property type="interactions" value="938"/>
</dbReference>
<dbReference type="IntAct" id="Q13415">
    <property type="interactions" value="58"/>
</dbReference>
<dbReference type="MINT" id="Q13415"/>
<dbReference type="STRING" id="9606.ENSP00000360623"/>
<dbReference type="GlyGen" id="Q13415">
    <property type="glycosylation" value="2 sites, 1 O-linked glycan (1 site)"/>
</dbReference>
<dbReference type="iPTMnet" id="Q13415"/>
<dbReference type="PhosphoSitePlus" id="Q13415"/>
<dbReference type="BioMuta" id="ORC1"/>
<dbReference type="DMDM" id="76803807"/>
<dbReference type="jPOST" id="Q13415"/>
<dbReference type="MassIVE" id="Q13415"/>
<dbReference type="PaxDb" id="9606-ENSP00000360623"/>
<dbReference type="PeptideAtlas" id="Q13415"/>
<dbReference type="ProteomicsDB" id="59394"/>
<dbReference type="Pumba" id="Q13415"/>
<dbReference type="Antibodypedia" id="19104">
    <property type="antibodies" value="227 antibodies from 32 providers"/>
</dbReference>
<dbReference type="DNASU" id="4998"/>
<dbReference type="Ensembl" id="ENST00000371566.1">
    <property type="protein sequence ID" value="ENSP00000360621.1"/>
    <property type="gene ID" value="ENSG00000085840.13"/>
</dbReference>
<dbReference type="Ensembl" id="ENST00000371568.8">
    <property type="protein sequence ID" value="ENSP00000360623.3"/>
    <property type="gene ID" value="ENSG00000085840.13"/>
</dbReference>
<dbReference type="GeneID" id="4998"/>
<dbReference type="KEGG" id="hsa:4998"/>
<dbReference type="MANE-Select" id="ENST00000371568.8">
    <property type="protein sequence ID" value="ENSP00000360623.3"/>
    <property type="RefSeq nucleotide sequence ID" value="NM_004153.4"/>
    <property type="RefSeq protein sequence ID" value="NP_004144.2"/>
</dbReference>
<dbReference type="UCSC" id="uc001ctt.4">
    <property type="organism name" value="human"/>
</dbReference>
<dbReference type="AGR" id="HGNC:8487"/>
<dbReference type="CTD" id="4998"/>
<dbReference type="DisGeNET" id="4998"/>
<dbReference type="GeneCards" id="ORC1"/>
<dbReference type="HGNC" id="HGNC:8487">
    <property type="gene designation" value="ORC1"/>
</dbReference>
<dbReference type="HPA" id="ENSG00000085840">
    <property type="expression patterns" value="Tissue enhanced (bone marrow, lymphoid tissue)"/>
</dbReference>
<dbReference type="MalaCards" id="ORC1"/>
<dbReference type="MIM" id="224690">
    <property type="type" value="phenotype"/>
</dbReference>
<dbReference type="MIM" id="601902">
    <property type="type" value="gene"/>
</dbReference>
<dbReference type="neXtProt" id="NX_Q13415"/>
<dbReference type="OpenTargets" id="ENSG00000085840"/>
<dbReference type="Orphanet" id="2554">
    <property type="disease" value="Ear-patella-short stature syndrome"/>
</dbReference>
<dbReference type="PharmGKB" id="PA32808"/>
<dbReference type="VEuPathDB" id="HostDB:ENSG00000085840"/>
<dbReference type="eggNOG" id="KOG1514">
    <property type="taxonomic scope" value="Eukaryota"/>
</dbReference>
<dbReference type="GeneTree" id="ENSGT00530000063498"/>
<dbReference type="HOGENOM" id="CLU_012774_0_1_1"/>
<dbReference type="InParanoid" id="Q13415"/>
<dbReference type="OMA" id="CEVPVCK"/>
<dbReference type="OrthoDB" id="1926878at2759"/>
<dbReference type="PAN-GO" id="Q13415">
    <property type="GO annotations" value="4 GO annotations based on evolutionary models"/>
</dbReference>
<dbReference type="PhylomeDB" id="Q13415"/>
<dbReference type="TreeFam" id="TF313743"/>
<dbReference type="BRENDA" id="3.6.4.B8">
    <property type="organism ID" value="2681"/>
</dbReference>
<dbReference type="PathwayCommons" id="Q13415"/>
<dbReference type="Reactome" id="R-HSA-113507">
    <property type="pathway name" value="E2F-enabled inhibition of pre-replication complex formation"/>
</dbReference>
<dbReference type="Reactome" id="R-HSA-176187">
    <property type="pathway name" value="Activation of ATR in response to replication stress"/>
</dbReference>
<dbReference type="Reactome" id="R-HSA-68616">
    <property type="pathway name" value="Assembly of the ORC complex at the origin of replication"/>
</dbReference>
<dbReference type="Reactome" id="R-HSA-68689">
    <property type="pathway name" value="CDC6 association with the ORC:origin complex"/>
</dbReference>
<dbReference type="Reactome" id="R-HSA-68867">
    <property type="pathway name" value="Assembly of the pre-replicative complex"/>
</dbReference>
<dbReference type="Reactome" id="R-HSA-68949">
    <property type="pathway name" value="Orc1 removal from chromatin"/>
</dbReference>
<dbReference type="Reactome" id="R-HSA-68962">
    <property type="pathway name" value="Activation of the pre-replicative complex"/>
</dbReference>
<dbReference type="Reactome" id="R-HSA-69205">
    <property type="pathway name" value="G1/S-Specific Transcription"/>
</dbReference>
<dbReference type="SignaLink" id="Q13415"/>
<dbReference type="SIGNOR" id="Q13415"/>
<dbReference type="BioGRID-ORCS" id="4998">
    <property type="hits" value="731 hits in 1167 CRISPR screens"/>
</dbReference>
<dbReference type="CD-CODE" id="8C2F96ED">
    <property type="entry name" value="Centrosome"/>
</dbReference>
<dbReference type="GeneWiki" id="ORC1"/>
<dbReference type="GenomeRNAi" id="4998"/>
<dbReference type="Pharos" id="Q13415">
    <property type="development level" value="Tbio"/>
</dbReference>
<dbReference type="PRO" id="PR:Q13415"/>
<dbReference type="Proteomes" id="UP000005640">
    <property type="component" value="Chromosome 1"/>
</dbReference>
<dbReference type="RNAct" id="Q13415">
    <property type="molecule type" value="protein"/>
</dbReference>
<dbReference type="Bgee" id="ENSG00000085840">
    <property type="expression patterns" value="Expressed in male germ line stem cell (sensu Vertebrata) in testis and 94 other cell types or tissues"/>
</dbReference>
<dbReference type="GO" id="GO:0000781">
    <property type="term" value="C:chromosome, telomeric region"/>
    <property type="evidence" value="ECO:0007005"/>
    <property type="project" value="BHF-UCL"/>
</dbReference>
<dbReference type="GO" id="GO:0005829">
    <property type="term" value="C:cytosol"/>
    <property type="evidence" value="ECO:0000304"/>
    <property type="project" value="Reactome"/>
</dbReference>
<dbReference type="GO" id="GO:0005664">
    <property type="term" value="C:nuclear origin of replication recognition complex"/>
    <property type="evidence" value="ECO:0000314"/>
    <property type="project" value="UniProtKB"/>
</dbReference>
<dbReference type="GO" id="GO:0005654">
    <property type="term" value="C:nucleoplasm"/>
    <property type="evidence" value="ECO:0000314"/>
    <property type="project" value="HPA"/>
</dbReference>
<dbReference type="GO" id="GO:0005634">
    <property type="term" value="C:nucleus"/>
    <property type="evidence" value="ECO:0000304"/>
    <property type="project" value="ProtInc"/>
</dbReference>
<dbReference type="GO" id="GO:0000808">
    <property type="term" value="C:origin recognition complex"/>
    <property type="evidence" value="ECO:0000314"/>
    <property type="project" value="UniProtKB"/>
</dbReference>
<dbReference type="GO" id="GO:0005524">
    <property type="term" value="F:ATP binding"/>
    <property type="evidence" value="ECO:0007669"/>
    <property type="project" value="UniProtKB-KW"/>
</dbReference>
<dbReference type="GO" id="GO:0016887">
    <property type="term" value="F:ATP hydrolysis activity"/>
    <property type="evidence" value="ECO:0007669"/>
    <property type="project" value="InterPro"/>
</dbReference>
<dbReference type="GO" id="GO:0003682">
    <property type="term" value="F:chromatin binding"/>
    <property type="evidence" value="ECO:0007669"/>
    <property type="project" value="InterPro"/>
</dbReference>
<dbReference type="GO" id="GO:0003677">
    <property type="term" value="F:DNA binding"/>
    <property type="evidence" value="ECO:0000304"/>
    <property type="project" value="ProtInc"/>
</dbReference>
<dbReference type="GO" id="GO:0003688">
    <property type="term" value="F:DNA replication origin binding"/>
    <property type="evidence" value="ECO:0000318"/>
    <property type="project" value="GO_Central"/>
</dbReference>
<dbReference type="GO" id="GO:0046872">
    <property type="term" value="F:metal ion binding"/>
    <property type="evidence" value="ECO:0007669"/>
    <property type="project" value="UniProtKB-KW"/>
</dbReference>
<dbReference type="GO" id="GO:0006270">
    <property type="term" value="P:DNA replication initiation"/>
    <property type="evidence" value="ECO:0000314"/>
    <property type="project" value="ComplexPortal"/>
</dbReference>
<dbReference type="GO" id="GO:0033314">
    <property type="term" value="P:mitotic DNA replication checkpoint signaling"/>
    <property type="evidence" value="ECO:0000318"/>
    <property type="project" value="GO_Central"/>
</dbReference>
<dbReference type="CDD" id="cd04719">
    <property type="entry name" value="BAH_Orc1p_animal"/>
    <property type="match status" value="1"/>
</dbReference>
<dbReference type="CDD" id="cd08768">
    <property type="entry name" value="Cdc6_C"/>
    <property type="match status" value="1"/>
</dbReference>
<dbReference type="DisProt" id="DP02072"/>
<dbReference type="FunFam" id="1.10.8.60:FF:000062">
    <property type="entry name" value="Origin recognition complex subunit 1"/>
    <property type="match status" value="1"/>
</dbReference>
<dbReference type="FunFam" id="2.30.30.490:FF:000010">
    <property type="entry name" value="Origin recognition complex subunit 1"/>
    <property type="match status" value="1"/>
</dbReference>
<dbReference type="FunFam" id="3.40.50.300:FF:000199">
    <property type="entry name" value="Origin recognition complex subunit 1"/>
    <property type="match status" value="1"/>
</dbReference>
<dbReference type="Gene3D" id="1.10.8.60">
    <property type="match status" value="1"/>
</dbReference>
<dbReference type="Gene3D" id="2.30.30.490">
    <property type="match status" value="1"/>
</dbReference>
<dbReference type="Gene3D" id="3.40.50.300">
    <property type="entry name" value="P-loop containing nucleotide triphosphate hydrolases"/>
    <property type="match status" value="1"/>
</dbReference>
<dbReference type="InterPro" id="IPR003593">
    <property type="entry name" value="AAA+_ATPase"/>
</dbReference>
<dbReference type="InterPro" id="IPR041083">
    <property type="entry name" value="AAA_lid_10"/>
</dbReference>
<dbReference type="InterPro" id="IPR003959">
    <property type="entry name" value="ATPase_AAA_core"/>
</dbReference>
<dbReference type="InterPro" id="IPR001025">
    <property type="entry name" value="BAH_dom"/>
</dbReference>
<dbReference type="InterPro" id="IPR043151">
    <property type="entry name" value="BAH_sf"/>
</dbReference>
<dbReference type="InterPro" id="IPR015163">
    <property type="entry name" value="Cdc6_C"/>
</dbReference>
<dbReference type="InterPro" id="IPR050311">
    <property type="entry name" value="ORC1/CDC6"/>
</dbReference>
<dbReference type="InterPro" id="IPR027417">
    <property type="entry name" value="P-loop_NTPase"/>
</dbReference>
<dbReference type="PANTHER" id="PTHR10763">
    <property type="entry name" value="CELL DIVISION CONTROL PROTEIN 6-RELATED"/>
    <property type="match status" value="1"/>
</dbReference>
<dbReference type="PANTHER" id="PTHR10763:SF23">
    <property type="entry name" value="ORIGIN RECOGNITION COMPLEX SUBUNIT 1"/>
    <property type="match status" value="1"/>
</dbReference>
<dbReference type="Pfam" id="PF00004">
    <property type="entry name" value="AAA"/>
    <property type="match status" value="1"/>
</dbReference>
<dbReference type="Pfam" id="PF17872">
    <property type="entry name" value="AAA_lid_10"/>
    <property type="match status" value="1"/>
</dbReference>
<dbReference type="Pfam" id="PF01426">
    <property type="entry name" value="BAH"/>
    <property type="match status" value="1"/>
</dbReference>
<dbReference type="Pfam" id="PF09079">
    <property type="entry name" value="Cdc6_C"/>
    <property type="match status" value="1"/>
</dbReference>
<dbReference type="SMART" id="SM00382">
    <property type="entry name" value="AAA"/>
    <property type="match status" value="1"/>
</dbReference>
<dbReference type="SMART" id="SM00439">
    <property type="entry name" value="BAH"/>
    <property type="match status" value="1"/>
</dbReference>
<dbReference type="SMART" id="SM01074">
    <property type="entry name" value="Cdc6_C"/>
    <property type="match status" value="1"/>
</dbReference>
<dbReference type="SUPFAM" id="SSF52540">
    <property type="entry name" value="P-loop containing nucleoside triphosphate hydrolases"/>
    <property type="match status" value="1"/>
</dbReference>
<dbReference type="PROSITE" id="PS51038">
    <property type="entry name" value="BAH"/>
    <property type="match status" value="1"/>
</dbReference>
<sequence length="861" mass="97350">MAHYPTRLKTRKTYSWVGRPLLDRKLHYQTYREMCVKTEGCSTEIHIQIGQFVLIEGDDDENPYVAKLLELFEDDSDPPPKKRARVQWFVRFCEVPACKRHLLGRKPGAQEIFWYDYPACDSNINAETIIGLVRVIPLAPKDVVPTNLKNEKTLFVKLSWNEKKFRPLSSELFAELNKPQESAAKCQKPVRAKSKSAESPSWTPAEHVAKRIESRHSASKSRQTPTHPLTPRARKRLELGNLGNPQMSQQTSCASLDSPGRIKRKVAFSEITSPSKRSQPDKLQTLSPALKAPEKTRETGLSYTEDDKKASPEHRIILRTRIAASKTIDIREERTLTPISGGQRSSVVPSVILKPENIKKRDAKEAKAQNEATSTPHRIRRKSSVLTMNRIRQQLRFLGNSKSDQEEKEILPAAEISDSSSDEEEASTPPLPRRAPRTVSRNLRSSLKSSLHTLTKVPKKSLKPRTPRCAAPQIRSRSLAAQEPASVLEEARLRLHVSAVPESLPCREQEFQDIYNFVESKLLDHTGGCMYISGVPGTGKTATVHEVIRCLQQAAQANDVPPFQYIEVNGMKLTEPHQVYVQILQKLTGQKATANHAAELLAKQFCTRGSPQETTVLLVDELDLLWTHKQDIMYNLFDWPTHKEARLVVLAIANTMDLPERIMMNRVSSRLGLTRMCFQPYTYSQLQQILRSRLKHLKAFEDDAIQLVARKVAALSGDARRCLDICRRATEICEFSQQKPDSPGLVTIAHSMEAVDEMFSSSYITAIKNSSVLEQSFLRAILAEFRRSGLEEATFQQIYSQHVALCRMEGLPYPTMSETMAVCSHLGSCRLLLVEPSRNDLLLRVRLNVSQDDVLYALKDE</sequence>
<accession>Q13415</accession>
<accession>D3DQ34</accession>
<accession>Q13471</accession>
<accession>Q5T0F5</accession>
<reference key="1">
    <citation type="journal article" date="1995" name="Science">
        <title>Conserved initiator proteins in eukaryotes.</title>
        <authorList>
            <person name="Gavin K.A."/>
            <person name="Hidaka M."/>
            <person name="Stillman B.D."/>
        </authorList>
    </citation>
    <scope>NUCLEOTIDE SEQUENCE [MRNA]</scope>
</reference>
<reference key="2">
    <citation type="submission" date="1995-12" db="EMBL/GenBank/DDBJ databases">
        <authorList>
            <person name="Wolf D.A."/>
            <person name="McKeon F."/>
        </authorList>
    </citation>
    <scope>NUCLEOTIDE SEQUENCE [MRNA]</scope>
</reference>
<reference key="3">
    <citation type="journal article" date="2006" name="Nature">
        <title>The DNA sequence and biological annotation of human chromosome 1.</title>
        <authorList>
            <person name="Gregory S.G."/>
            <person name="Barlow K.F."/>
            <person name="McLay K.E."/>
            <person name="Kaul R."/>
            <person name="Swarbreck D."/>
            <person name="Dunham A."/>
            <person name="Scott C.E."/>
            <person name="Howe K.L."/>
            <person name="Woodfine K."/>
            <person name="Spencer C.C.A."/>
            <person name="Jones M.C."/>
            <person name="Gillson C."/>
            <person name="Searle S."/>
            <person name="Zhou Y."/>
            <person name="Kokocinski F."/>
            <person name="McDonald L."/>
            <person name="Evans R."/>
            <person name="Phillips K."/>
            <person name="Atkinson A."/>
            <person name="Cooper R."/>
            <person name="Jones C."/>
            <person name="Hall R.E."/>
            <person name="Andrews T.D."/>
            <person name="Lloyd C."/>
            <person name="Ainscough R."/>
            <person name="Almeida J.P."/>
            <person name="Ambrose K.D."/>
            <person name="Anderson F."/>
            <person name="Andrew R.W."/>
            <person name="Ashwell R.I.S."/>
            <person name="Aubin K."/>
            <person name="Babbage A.K."/>
            <person name="Bagguley C.L."/>
            <person name="Bailey J."/>
            <person name="Beasley H."/>
            <person name="Bethel G."/>
            <person name="Bird C.P."/>
            <person name="Bray-Allen S."/>
            <person name="Brown J.Y."/>
            <person name="Brown A.J."/>
            <person name="Buckley D."/>
            <person name="Burton J."/>
            <person name="Bye J."/>
            <person name="Carder C."/>
            <person name="Chapman J.C."/>
            <person name="Clark S.Y."/>
            <person name="Clarke G."/>
            <person name="Clee C."/>
            <person name="Cobley V."/>
            <person name="Collier R.E."/>
            <person name="Corby N."/>
            <person name="Coville G.J."/>
            <person name="Davies J."/>
            <person name="Deadman R."/>
            <person name="Dunn M."/>
            <person name="Earthrowl M."/>
            <person name="Ellington A.G."/>
            <person name="Errington H."/>
            <person name="Frankish A."/>
            <person name="Frankland J."/>
            <person name="French L."/>
            <person name="Garner P."/>
            <person name="Garnett J."/>
            <person name="Gay L."/>
            <person name="Ghori M.R.J."/>
            <person name="Gibson R."/>
            <person name="Gilby L.M."/>
            <person name="Gillett W."/>
            <person name="Glithero R.J."/>
            <person name="Grafham D.V."/>
            <person name="Griffiths C."/>
            <person name="Griffiths-Jones S."/>
            <person name="Grocock R."/>
            <person name="Hammond S."/>
            <person name="Harrison E.S.I."/>
            <person name="Hart E."/>
            <person name="Haugen E."/>
            <person name="Heath P.D."/>
            <person name="Holmes S."/>
            <person name="Holt K."/>
            <person name="Howden P.J."/>
            <person name="Hunt A.R."/>
            <person name="Hunt S.E."/>
            <person name="Hunter G."/>
            <person name="Isherwood J."/>
            <person name="James R."/>
            <person name="Johnson C."/>
            <person name="Johnson D."/>
            <person name="Joy A."/>
            <person name="Kay M."/>
            <person name="Kershaw J.K."/>
            <person name="Kibukawa M."/>
            <person name="Kimberley A.M."/>
            <person name="King A."/>
            <person name="Knights A.J."/>
            <person name="Lad H."/>
            <person name="Laird G."/>
            <person name="Lawlor S."/>
            <person name="Leongamornlert D.A."/>
            <person name="Lloyd D.M."/>
            <person name="Loveland J."/>
            <person name="Lovell J."/>
            <person name="Lush M.J."/>
            <person name="Lyne R."/>
            <person name="Martin S."/>
            <person name="Mashreghi-Mohammadi M."/>
            <person name="Matthews L."/>
            <person name="Matthews N.S.W."/>
            <person name="McLaren S."/>
            <person name="Milne S."/>
            <person name="Mistry S."/>
            <person name="Moore M.J.F."/>
            <person name="Nickerson T."/>
            <person name="O'Dell C.N."/>
            <person name="Oliver K."/>
            <person name="Palmeiri A."/>
            <person name="Palmer S.A."/>
            <person name="Parker A."/>
            <person name="Patel D."/>
            <person name="Pearce A.V."/>
            <person name="Peck A.I."/>
            <person name="Pelan S."/>
            <person name="Phelps K."/>
            <person name="Phillimore B.J."/>
            <person name="Plumb R."/>
            <person name="Rajan J."/>
            <person name="Raymond C."/>
            <person name="Rouse G."/>
            <person name="Saenphimmachak C."/>
            <person name="Sehra H.K."/>
            <person name="Sheridan E."/>
            <person name="Shownkeen R."/>
            <person name="Sims S."/>
            <person name="Skuce C.D."/>
            <person name="Smith M."/>
            <person name="Steward C."/>
            <person name="Subramanian S."/>
            <person name="Sycamore N."/>
            <person name="Tracey A."/>
            <person name="Tromans A."/>
            <person name="Van Helmond Z."/>
            <person name="Wall M."/>
            <person name="Wallis J.M."/>
            <person name="White S."/>
            <person name="Whitehead S.L."/>
            <person name="Wilkinson J.E."/>
            <person name="Willey D.L."/>
            <person name="Williams H."/>
            <person name="Wilming L."/>
            <person name="Wray P.W."/>
            <person name="Wu Z."/>
            <person name="Coulson A."/>
            <person name="Vaudin M."/>
            <person name="Sulston J.E."/>
            <person name="Durbin R.M."/>
            <person name="Hubbard T."/>
            <person name="Wooster R."/>
            <person name="Dunham I."/>
            <person name="Carter N.P."/>
            <person name="McVean G."/>
            <person name="Ross M.T."/>
            <person name="Harrow J."/>
            <person name="Olson M.V."/>
            <person name="Beck S."/>
            <person name="Rogers J."/>
            <person name="Bentley D.R."/>
        </authorList>
    </citation>
    <scope>NUCLEOTIDE SEQUENCE [LARGE SCALE GENOMIC DNA]</scope>
</reference>
<reference key="4">
    <citation type="submission" date="2005-09" db="EMBL/GenBank/DDBJ databases">
        <authorList>
            <person name="Mural R.J."/>
            <person name="Istrail S."/>
            <person name="Sutton G.G."/>
            <person name="Florea L."/>
            <person name="Halpern A.L."/>
            <person name="Mobarry C.M."/>
            <person name="Lippert R."/>
            <person name="Walenz B."/>
            <person name="Shatkay H."/>
            <person name="Dew I."/>
            <person name="Miller J.R."/>
            <person name="Flanigan M.J."/>
            <person name="Edwards N.J."/>
            <person name="Bolanos R."/>
            <person name="Fasulo D."/>
            <person name="Halldorsson B.V."/>
            <person name="Hannenhalli S."/>
            <person name="Turner R."/>
            <person name="Yooseph S."/>
            <person name="Lu F."/>
            <person name="Nusskern D.R."/>
            <person name="Shue B.C."/>
            <person name="Zheng X.H."/>
            <person name="Zhong F."/>
            <person name="Delcher A.L."/>
            <person name="Huson D.H."/>
            <person name="Kravitz S.A."/>
            <person name="Mouchard L."/>
            <person name="Reinert K."/>
            <person name="Remington K.A."/>
            <person name="Clark A.G."/>
            <person name="Waterman M.S."/>
            <person name="Eichler E.E."/>
            <person name="Adams M.D."/>
            <person name="Hunkapiller M.W."/>
            <person name="Myers E.W."/>
            <person name="Venter J.C."/>
        </authorList>
    </citation>
    <scope>NUCLEOTIDE SEQUENCE [LARGE SCALE GENOMIC DNA]</scope>
</reference>
<reference key="5">
    <citation type="journal article" date="1998" name="Mol. Cell. Biol.">
        <title>Human CDC6/Cdc18 associates with Orc1 and cyclin-cdk and is selectively eliminated from the nucleus at the onset of S phase.</title>
        <authorList>
            <person name="Saha P."/>
            <person name="Chen J."/>
            <person name="Thome K.C."/>
            <person name="Lawlis S.J."/>
            <person name="Hou Z.H."/>
            <person name="Hendricks M."/>
            <person name="Parvin J.D."/>
            <person name="Dutta A."/>
        </authorList>
    </citation>
    <scope>INTERACTION WITH CDC6</scope>
</reference>
<reference key="6">
    <citation type="journal article" date="1999" name="J. Biol. Chem.">
        <title>Histone acetyltransferase HBO1 interacts with the ORC1 subunit of the human initiator protein.</title>
        <authorList>
            <person name="Iizuka M."/>
            <person name="Stillman B."/>
        </authorList>
    </citation>
    <scope>INTERACTION WITH KAT7</scope>
</reference>
<reference key="7">
    <citation type="journal article" date="2003" name="J. Biol. Chem.">
        <title>The ORC1 cycle in human cells: I. cell cycle-regulated oscillation of human ORC1.</title>
        <authorList>
            <person name="Tatsumi Y."/>
            <person name="Ohta S."/>
            <person name="Kimura H."/>
            <person name="Tsurimoto T."/>
            <person name="Obuse C."/>
        </authorList>
    </citation>
    <scope>DEVELOPMENTAL STAGE</scope>
</reference>
<reference key="8">
    <citation type="journal article" date="2003" name="J. Biol. Chem.">
        <title>The ORC1 cycle in human cells: II. Dynamic changes in the human ORC complex during the cell cycle.</title>
        <authorList>
            <person name="Ohta S."/>
            <person name="Tatsumi Y."/>
            <person name="Fujita M."/>
            <person name="Tsurimoto T."/>
            <person name="Obuse C."/>
        </authorList>
    </citation>
    <scope>IDENTIFICATION IN THE ORC COMPLEX</scope>
    <scope>IDENTIFICATION BY MASS SPECTROMETRY</scope>
    <scope>ASSEMBLY OF THE ORC COMPLEX</scope>
</reference>
<reference key="9">
    <citation type="journal article" date="2007" name="J. Biol. Chem.">
        <title>ATP-dependent assembly of the human origin recognition complex.</title>
        <authorList>
            <person name="Siddiqui K."/>
            <person name="Stillman B."/>
        </authorList>
    </citation>
    <scope>RECONSTITUTION OF THE ORC COMPLEX</scope>
    <scope>DISASSEMBLY OF THE ORC COMPLEX</scope>
</reference>
<reference key="10">
    <citation type="journal article" date="2008" name="Proc. Natl. Acad. Sci. U.S.A.">
        <title>A quantitative atlas of mitotic phosphorylation.</title>
        <authorList>
            <person name="Dephoure N."/>
            <person name="Zhou C."/>
            <person name="Villen J."/>
            <person name="Beausoleil S.A."/>
            <person name="Bakalarski C.E."/>
            <person name="Elledge S.J."/>
            <person name="Gygi S.P."/>
        </authorList>
    </citation>
    <scope>PHOSPHORYLATION [LARGE SCALE ANALYSIS] AT THR-203; THR-337; SER-340; SER-417; SER-420 AND SER-478</scope>
    <scope>IDENTIFICATION BY MASS SPECTROMETRY [LARGE SCALE ANALYSIS]</scope>
    <source>
        <tissue>Cervix carcinoma</tissue>
    </source>
</reference>
<reference key="11">
    <citation type="journal article" date="2009" name="Anal. Chem.">
        <title>Lys-N and trypsin cover complementary parts of the phosphoproteome in a refined SCX-based approach.</title>
        <authorList>
            <person name="Gauci S."/>
            <person name="Helbig A.O."/>
            <person name="Slijper M."/>
            <person name="Krijgsveld J."/>
            <person name="Heck A.J."/>
            <person name="Mohammed S."/>
        </authorList>
    </citation>
    <scope>IDENTIFICATION BY MASS SPECTROMETRY [LARGE SCALE ANALYSIS]</scope>
</reference>
<reference key="12">
    <citation type="journal article" date="2009" name="Science">
        <title>Lysine acetylation targets protein complexes and co-regulates major cellular functions.</title>
        <authorList>
            <person name="Choudhary C."/>
            <person name="Kumar C."/>
            <person name="Gnad F."/>
            <person name="Nielsen M.L."/>
            <person name="Rehman M."/>
            <person name="Walther T.C."/>
            <person name="Olsen J.V."/>
            <person name="Mann M."/>
        </authorList>
    </citation>
    <scope>ACETYLATION [LARGE SCALE ANALYSIS] AT LYS-326</scope>
    <scope>IDENTIFICATION BY MASS SPECTROMETRY [LARGE SCALE ANALYSIS]</scope>
</reference>
<reference key="13">
    <citation type="journal article" date="2010" name="Sci. Signal.">
        <title>Quantitative phosphoproteomics reveals widespread full phosphorylation site occupancy during mitosis.</title>
        <authorList>
            <person name="Olsen J.V."/>
            <person name="Vermeulen M."/>
            <person name="Santamaria A."/>
            <person name="Kumar C."/>
            <person name="Miller M.L."/>
            <person name="Jensen L.J."/>
            <person name="Gnad F."/>
            <person name="Cox J."/>
            <person name="Jensen T.S."/>
            <person name="Nigg E.A."/>
            <person name="Brunak S."/>
            <person name="Mann M."/>
        </authorList>
    </citation>
    <scope>PHOSPHORYLATION [LARGE SCALE ANALYSIS] AT THR-203; SER-273 AND SER-287</scope>
    <scope>IDENTIFICATION BY MASS SPECTROMETRY [LARGE SCALE ANALYSIS]</scope>
    <source>
        <tissue>Cervix carcinoma</tissue>
    </source>
</reference>
<reference key="14">
    <citation type="journal article" date="2011" name="Sci. Signal.">
        <title>System-wide temporal characterization of the proteome and phosphoproteome of human embryonic stem cell differentiation.</title>
        <authorList>
            <person name="Rigbolt K.T."/>
            <person name="Prokhorova T.A."/>
            <person name="Akimov V."/>
            <person name="Henningsen J."/>
            <person name="Johansen P.T."/>
            <person name="Kratchmarova I."/>
            <person name="Kassem M."/>
            <person name="Mann M."/>
            <person name="Olsen J.V."/>
            <person name="Blagoev B."/>
        </authorList>
    </citation>
    <scope>PHOSPHORYLATION [LARGE SCALE ANALYSIS] AT SER-273</scope>
    <scope>IDENTIFICATION BY MASS SPECTROMETRY [LARGE SCALE ANALYSIS]</scope>
</reference>
<reference key="15">
    <citation type="journal article" date="2012" name="Mol. Cell. Biol.">
        <title>Dynamic association of ORCA with prereplicative complex components regulates DNA replication initiation.</title>
        <authorList>
            <person name="Shen Z."/>
            <person name="Chakraborty A."/>
            <person name="Jain A."/>
            <person name="Giri S."/>
            <person name="Ha T."/>
            <person name="Prasanth K.V."/>
            <person name="Prasanth S.G."/>
        </authorList>
    </citation>
    <scope>INTERACTION WITH LRWD1</scope>
    <scope>PHOSPHORYLATION DURING MITOSIS</scope>
</reference>
<reference key="16">
    <citation type="journal article" date="2013" name="J. Proteome Res.">
        <title>Toward a comprehensive characterization of a human cancer cell phosphoproteome.</title>
        <authorList>
            <person name="Zhou H."/>
            <person name="Di Palma S."/>
            <person name="Preisinger C."/>
            <person name="Peng M."/>
            <person name="Polat A.N."/>
            <person name="Heck A.J."/>
            <person name="Mohammed S."/>
        </authorList>
    </citation>
    <scope>PHOSPHORYLATION [LARGE SCALE ANALYSIS] AT SER-199; SER-273; SER-287 AND SER-478</scope>
    <scope>IDENTIFICATION BY MASS SPECTROMETRY [LARGE SCALE ANALYSIS]</scope>
    <source>
        <tissue>Cervix carcinoma</tissue>
        <tissue>Erythroleukemia</tissue>
    </source>
</reference>
<reference key="17">
    <citation type="journal article" date="2011" name="Nat. Genet.">
        <title>Mutations in ORC1, encoding the largest subunit of the origin recognition complex, cause microcephalic primordial dwarfism resembling Meier-Gorlin syndrome.</title>
        <authorList>
            <person name="Bicknell L.S."/>
            <person name="Walker S."/>
            <person name="Klingseisen A."/>
            <person name="Stiff T."/>
            <person name="Leitch A."/>
            <person name="Kerzendorfer C."/>
            <person name="Martin C.A."/>
            <person name="Yeyati P."/>
            <person name="Al Sanna N."/>
            <person name="Bober M."/>
            <person name="Johnson D."/>
            <person name="Wise C."/>
            <person name="Jackson A.P."/>
            <person name="O'Driscoll M."/>
            <person name="Jeggo P.A."/>
        </authorList>
    </citation>
    <scope>VARIANTS MGORS1 SER-89; GLN-105; GLY-127 AND GLN-720</scope>
</reference>
<reference key="18">
    <citation type="journal article" date="2011" name="Nat. Genet.">
        <title>Mutations in the pre-replication complex cause Meier-Gorlin syndrome.</title>
        <authorList>
            <person name="Bicknell L.S."/>
            <person name="Bongers E.M."/>
            <person name="Leitch A."/>
            <person name="Brown S."/>
            <person name="Schoots J."/>
            <person name="Harley M.E."/>
            <person name="Aftimos S."/>
            <person name="Al-Aama J.Y."/>
            <person name="Bober M."/>
            <person name="Brown P.A."/>
            <person name="van Bokhoven H."/>
            <person name="Dean J."/>
            <person name="Edrees A.Y."/>
            <person name="Feingold M."/>
            <person name="Fryer A."/>
            <person name="Hoefsloot L.H."/>
            <person name="Kau N."/>
            <person name="Knoers N.V."/>
            <person name="Mackenzie J."/>
            <person name="Opitz J.M."/>
            <person name="Sarda P."/>
            <person name="Ross A."/>
            <person name="Temple I.K."/>
            <person name="Toutain A."/>
            <person name="Wise C.A."/>
            <person name="Wright M."/>
            <person name="Jackson A.P."/>
        </authorList>
    </citation>
    <scope>VARIANT MGORS1 GLN-105</scope>
</reference>
<reference key="19">
    <citation type="journal article" date="2011" name="Nat. Genet.">
        <title>Mutations in origin recognition complex gene ORC4 cause Meier-Gorlin syndrome.</title>
        <authorList>
            <person name="Guernsey D.L."/>
            <person name="Matsuoka M."/>
            <person name="Jiang H."/>
            <person name="Evans S."/>
            <person name="Macgillivray C."/>
            <person name="Nightingale M."/>
            <person name="Perry S."/>
            <person name="Ferguson M."/>
            <person name="LeBlanc M."/>
            <person name="Paquette J."/>
            <person name="Patry L."/>
            <person name="Rideout A.L."/>
            <person name="Thomas A."/>
            <person name="Orr A."/>
            <person name="McMaster C.R."/>
            <person name="Michaud J.L."/>
            <person name="Deal C."/>
            <person name="Langlois S."/>
            <person name="Superneau D.W."/>
            <person name="Parkash S."/>
            <person name="Ludman M."/>
            <person name="Skidmore D.L."/>
            <person name="Samuels M.E."/>
        </authorList>
    </citation>
    <scope>VARIANTS MGORS1 GLN-105 AND TRP-666</scope>
</reference>
<reference key="20">
    <citation type="journal article" date="2017" name="Elife">
        <title>Structure of the active form of human origin recognition complex and its ATPase motor module.</title>
        <authorList>
            <person name="Tocilj A."/>
            <person name="On K.F."/>
            <person name="Yuan Z."/>
            <person name="Sun J."/>
            <person name="Elkayam E."/>
            <person name="Li H."/>
            <person name="Stillman B."/>
            <person name="Joshua-Tor L."/>
        </authorList>
    </citation>
    <scope>X-RAY CRYSTALLOGRAPHY (3.39 ANGSTROMS) OF 471-861 IN COMPLEX WITH ATP AND MAGNESIUM</scope>
    <scope>MUTAGENESIS OF ASP-620</scope>
    <scope>CHARACTERIZATION OF VARIANT MGORS1 GLN-720</scope>
</reference>
<name>ORC1_HUMAN</name>
<protein>
    <recommendedName>
        <fullName>Origin recognition complex subunit 1</fullName>
    </recommendedName>
    <alternativeName>
        <fullName>Replication control protein 1</fullName>
    </alternativeName>
</protein>
<evidence type="ECO:0000250" key="1"/>
<evidence type="ECO:0000250" key="2">
    <source>
        <dbReference type="UniProtKB" id="Q9Z1N2"/>
    </source>
</evidence>
<evidence type="ECO:0000255" key="3">
    <source>
        <dbReference type="PROSITE-ProRule" id="PRU00370"/>
    </source>
</evidence>
<evidence type="ECO:0000256" key="4">
    <source>
        <dbReference type="SAM" id="MobiDB-lite"/>
    </source>
</evidence>
<evidence type="ECO:0000269" key="5">
    <source>
    </source>
</evidence>
<evidence type="ECO:0000269" key="6">
    <source>
    </source>
</evidence>
<evidence type="ECO:0000269" key="7">
    <source>
    </source>
</evidence>
<evidence type="ECO:0000269" key="8">
    <source>
    </source>
</evidence>
<evidence type="ECO:0000269" key="9">
    <source>
    </source>
</evidence>
<evidence type="ECO:0000269" key="10">
    <source>
    </source>
</evidence>
<evidence type="ECO:0000269" key="11">
    <source>
    </source>
</evidence>
<evidence type="ECO:0000269" key="12">
    <source>
    </source>
</evidence>
<evidence type="ECO:0000269" key="13">
    <source>
    </source>
</evidence>
<evidence type="ECO:0000305" key="14"/>
<evidence type="ECO:0007744" key="15">
    <source>
        <dbReference type="PDB" id="5UJ7"/>
    </source>
</evidence>
<evidence type="ECO:0007744" key="16">
    <source>
        <dbReference type="PDB" id="5UJM"/>
    </source>
</evidence>
<evidence type="ECO:0007744" key="17">
    <source>
    </source>
</evidence>
<evidence type="ECO:0007744" key="18">
    <source>
    </source>
</evidence>
<evidence type="ECO:0007744" key="19">
    <source>
    </source>
</evidence>
<evidence type="ECO:0007744" key="20">
    <source>
    </source>
</evidence>
<evidence type="ECO:0007744" key="21">
    <source>
    </source>
</evidence>
<evidence type="ECO:0007829" key="22">
    <source>
        <dbReference type="PDB" id="5UJ7"/>
    </source>
</evidence>
<evidence type="ECO:0007829" key="23">
    <source>
        <dbReference type="PDB" id="7JPO"/>
    </source>
</evidence>